<protein>
    <recommendedName>
        <fullName evidence="1">GMP synthase [glutamine-hydrolyzing]</fullName>
        <ecNumber evidence="1">6.3.5.2</ecNumber>
    </recommendedName>
    <alternativeName>
        <fullName evidence="1">GMP synthetase</fullName>
    </alternativeName>
    <alternativeName>
        <fullName evidence="1">Glutamine amidotransferase</fullName>
    </alternativeName>
</protein>
<dbReference type="EC" id="6.3.5.2" evidence="1"/>
<dbReference type="EMBL" id="CR543861">
    <property type="protein sequence ID" value="CAG67125.1"/>
    <property type="molecule type" value="Genomic_DNA"/>
</dbReference>
<dbReference type="SMR" id="Q6FFN2"/>
<dbReference type="STRING" id="202950.GCA_001485005_01887"/>
<dbReference type="MEROPS" id="C26.A07"/>
<dbReference type="KEGG" id="aci:ACIAD0151"/>
<dbReference type="eggNOG" id="COG0518">
    <property type="taxonomic scope" value="Bacteria"/>
</dbReference>
<dbReference type="eggNOG" id="COG0519">
    <property type="taxonomic scope" value="Bacteria"/>
</dbReference>
<dbReference type="HOGENOM" id="CLU_014340_0_5_6"/>
<dbReference type="UniPathway" id="UPA00189">
    <property type="reaction ID" value="UER00296"/>
</dbReference>
<dbReference type="Proteomes" id="UP000000430">
    <property type="component" value="Chromosome"/>
</dbReference>
<dbReference type="GO" id="GO:0005829">
    <property type="term" value="C:cytosol"/>
    <property type="evidence" value="ECO:0007669"/>
    <property type="project" value="TreeGrafter"/>
</dbReference>
<dbReference type="GO" id="GO:0005524">
    <property type="term" value="F:ATP binding"/>
    <property type="evidence" value="ECO:0007669"/>
    <property type="project" value="UniProtKB-UniRule"/>
</dbReference>
<dbReference type="GO" id="GO:0003921">
    <property type="term" value="F:GMP synthase activity"/>
    <property type="evidence" value="ECO:0007669"/>
    <property type="project" value="InterPro"/>
</dbReference>
<dbReference type="CDD" id="cd01742">
    <property type="entry name" value="GATase1_GMP_Synthase"/>
    <property type="match status" value="1"/>
</dbReference>
<dbReference type="CDD" id="cd01997">
    <property type="entry name" value="GMP_synthase_C"/>
    <property type="match status" value="1"/>
</dbReference>
<dbReference type="FunFam" id="3.30.300.10:FF:000002">
    <property type="entry name" value="GMP synthase [glutamine-hydrolyzing]"/>
    <property type="match status" value="1"/>
</dbReference>
<dbReference type="FunFam" id="3.40.50.620:FF:000001">
    <property type="entry name" value="GMP synthase [glutamine-hydrolyzing]"/>
    <property type="match status" value="1"/>
</dbReference>
<dbReference type="FunFam" id="3.40.50.880:FF:000001">
    <property type="entry name" value="GMP synthase [glutamine-hydrolyzing]"/>
    <property type="match status" value="1"/>
</dbReference>
<dbReference type="Gene3D" id="3.30.300.10">
    <property type="match status" value="1"/>
</dbReference>
<dbReference type="Gene3D" id="3.40.50.880">
    <property type="match status" value="1"/>
</dbReference>
<dbReference type="Gene3D" id="3.40.50.620">
    <property type="entry name" value="HUPs"/>
    <property type="match status" value="1"/>
</dbReference>
<dbReference type="HAMAP" id="MF_00344">
    <property type="entry name" value="GMP_synthase"/>
    <property type="match status" value="1"/>
</dbReference>
<dbReference type="InterPro" id="IPR029062">
    <property type="entry name" value="Class_I_gatase-like"/>
</dbReference>
<dbReference type="InterPro" id="IPR017926">
    <property type="entry name" value="GATASE"/>
</dbReference>
<dbReference type="InterPro" id="IPR001674">
    <property type="entry name" value="GMP_synth_C"/>
</dbReference>
<dbReference type="InterPro" id="IPR004739">
    <property type="entry name" value="GMP_synth_GATase"/>
</dbReference>
<dbReference type="InterPro" id="IPR022955">
    <property type="entry name" value="GMP_synthase"/>
</dbReference>
<dbReference type="InterPro" id="IPR025777">
    <property type="entry name" value="GMPS_ATP_PPase_dom"/>
</dbReference>
<dbReference type="InterPro" id="IPR022310">
    <property type="entry name" value="NAD/GMP_synthase"/>
</dbReference>
<dbReference type="InterPro" id="IPR014729">
    <property type="entry name" value="Rossmann-like_a/b/a_fold"/>
</dbReference>
<dbReference type="NCBIfam" id="TIGR00884">
    <property type="entry name" value="guaA_Cterm"/>
    <property type="match status" value="1"/>
</dbReference>
<dbReference type="NCBIfam" id="TIGR00888">
    <property type="entry name" value="guaA_Nterm"/>
    <property type="match status" value="1"/>
</dbReference>
<dbReference type="NCBIfam" id="NF000848">
    <property type="entry name" value="PRK00074.1"/>
    <property type="match status" value="1"/>
</dbReference>
<dbReference type="PANTHER" id="PTHR11922:SF2">
    <property type="entry name" value="GMP SYNTHASE [GLUTAMINE-HYDROLYZING]"/>
    <property type="match status" value="1"/>
</dbReference>
<dbReference type="PANTHER" id="PTHR11922">
    <property type="entry name" value="GMP SYNTHASE-RELATED"/>
    <property type="match status" value="1"/>
</dbReference>
<dbReference type="Pfam" id="PF00117">
    <property type="entry name" value="GATase"/>
    <property type="match status" value="1"/>
</dbReference>
<dbReference type="Pfam" id="PF00958">
    <property type="entry name" value="GMP_synt_C"/>
    <property type="match status" value="1"/>
</dbReference>
<dbReference type="Pfam" id="PF02540">
    <property type="entry name" value="NAD_synthase"/>
    <property type="match status" value="1"/>
</dbReference>
<dbReference type="PRINTS" id="PR00097">
    <property type="entry name" value="ANTSNTHASEII"/>
</dbReference>
<dbReference type="PRINTS" id="PR00099">
    <property type="entry name" value="CPSGATASE"/>
</dbReference>
<dbReference type="PRINTS" id="PR00096">
    <property type="entry name" value="GATASE"/>
</dbReference>
<dbReference type="SUPFAM" id="SSF52402">
    <property type="entry name" value="Adenine nucleotide alpha hydrolases-like"/>
    <property type="match status" value="1"/>
</dbReference>
<dbReference type="SUPFAM" id="SSF52317">
    <property type="entry name" value="Class I glutamine amidotransferase-like"/>
    <property type="match status" value="1"/>
</dbReference>
<dbReference type="SUPFAM" id="SSF54810">
    <property type="entry name" value="GMP synthetase C-terminal dimerisation domain"/>
    <property type="match status" value="1"/>
</dbReference>
<dbReference type="PROSITE" id="PS51273">
    <property type="entry name" value="GATASE_TYPE_1"/>
    <property type="match status" value="1"/>
</dbReference>
<dbReference type="PROSITE" id="PS51553">
    <property type="entry name" value="GMPS_ATP_PPASE"/>
    <property type="match status" value="1"/>
</dbReference>
<proteinExistence type="inferred from homology"/>
<sequence>MLIERTCAILGKMLEYCASLVALHSCVIMTTNTHITDDRILILDFGSQYSQLIARRVREAGVYSEMYAFDMSEEDIRAFNPNGIILSGGPESVHEEGSPRAPQVVFELGVPVLGICYGFQTMSEQLGGKVEPGTVHEFGYAEVDIQQRDQLVGNLQDRENQLHVWMSHGDKVSRLPEGFSTTASTPSCPFAAASDEARRFYGVQFHPEVTHTAKGAELLANFVHKICGCGGLWTPEHIIDLRVEQLRAQIGDEKVLLGLSGGVDSSVVAALLHKAIGDQLTCVFVDNGLLRLNEGDQVMQMFADNMGIRVIRADAEERFLTALAGEVDPEKKRKIIGREFIEVFAEEARKLDGVKFLAQGTIYPDVIESAASKQGKAHVIKSHHNVGGLPDDLEFELVEPLRDLFKDEVRKLGTTLGLPHSMIYRHPFPGPGLGVRILGEVKKEYADILRLADDIFMQELRASGWYDKTAQAFAVFQPVKSVGVVGDGRRYAWVIALRAVETVDFMTARFAHLPYELVDKISTRIMNEIKDVSRVVYDVSSKPPATIEWE</sequence>
<feature type="chain" id="PRO_0000229396" description="GMP synthase [glutamine-hydrolyzing]">
    <location>
        <begin position="1"/>
        <end position="550"/>
    </location>
</feature>
<feature type="domain" description="Glutamine amidotransferase type-1" evidence="1">
    <location>
        <begin position="39"/>
        <end position="232"/>
    </location>
</feature>
<feature type="domain" description="GMPS ATP-PPase" evidence="1">
    <location>
        <begin position="233"/>
        <end position="425"/>
    </location>
</feature>
<feature type="active site" description="Nucleophile" evidence="1">
    <location>
        <position position="116"/>
    </location>
</feature>
<feature type="active site" evidence="1">
    <location>
        <position position="206"/>
    </location>
</feature>
<feature type="active site" evidence="1">
    <location>
        <position position="208"/>
    </location>
</feature>
<feature type="binding site" evidence="1">
    <location>
        <begin position="260"/>
        <end position="266"/>
    </location>
    <ligand>
        <name>ATP</name>
        <dbReference type="ChEBI" id="CHEBI:30616"/>
    </ligand>
</feature>
<accession>Q6FFN2</accession>
<reference key="1">
    <citation type="journal article" date="2004" name="Nucleic Acids Res.">
        <title>Unique features revealed by the genome sequence of Acinetobacter sp. ADP1, a versatile and naturally transformation competent bacterium.</title>
        <authorList>
            <person name="Barbe V."/>
            <person name="Vallenet D."/>
            <person name="Fonknechten N."/>
            <person name="Kreimeyer A."/>
            <person name="Oztas S."/>
            <person name="Labarre L."/>
            <person name="Cruveiller S."/>
            <person name="Robert C."/>
            <person name="Duprat S."/>
            <person name="Wincker P."/>
            <person name="Ornston L.N."/>
            <person name="Weissenbach J."/>
            <person name="Marliere P."/>
            <person name="Cohen G.N."/>
            <person name="Medigue C."/>
        </authorList>
    </citation>
    <scope>NUCLEOTIDE SEQUENCE [LARGE SCALE GENOMIC DNA]</scope>
    <source>
        <strain>ATCC 33305 / BD413 / ADP1</strain>
    </source>
</reference>
<organism>
    <name type="scientific">Acinetobacter baylyi (strain ATCC 33305 / BD413 / ADP1)</name>
    <dbReference type="NCBI Taxonomy" id="62977"/>
    <lineage>
        <taxon>Bacteria</taxon>
        <taxon>Pseudomonadati</taxon>
        <taxon>Pseudomonadota</taxon>
        <taxon>Gammaproteobacteria</taxon>
        <taxon>Moraxellales</taxon>
        <taxon>Moraxellaceae</taxon>
        <taxon>Acinetobacter</taxon>
    </lineage>
</organism>
<gene>
    <name evidence="1" type="primary">guaA</name>
    <name type="ordered locus">ACIAD0151</name>
</gene>
<keyword id="KW-0067">ATP-binding</keyword>
<keyword id="KW-0315">Glutamine amidotransferase</keyword>
<keyword id="KW-0332">GMP biosynthesis</keyword>
<keyword id="KW-0436">Ligase</keyword>
<keyword id="KW-0547">Nucleotide-binding</keyword>
<keyword id="KW-0658">Purine biosynthesis</keyword>
<evidence type="ECO:0000255" key="1">
    <source>
        <dbReference type="HAMAP-Rule" id="MF_00344"/>
    </source>
</evidence>
<name>GUAA_ACIAD</name>
<comment type="function">
    <text evidence="1">Catalyzes the synthesis of GMP from XMP.</text>
</comment>
<comment type="catalytic activity">
    <reaction evidence="1">
        <text>XMP + L-glutamine + ATP + H2O = GMP + L-glutamate + AMP + diphosphate + 2 H(+)</text>
        <dbReference type="Rhea" id="RHEA:11680"/>
        <dbReference type="ChEBI" id="CHEBI:15377"/>
        <dbReference type="ChEBI" id="CHEBI:15378"/>
        <dbReference type="ChEBI" id="CHEBI:29985"/>
        <dbReference type="ChEBI" id="CHEBI:30616"/>
        <dbReference type="ChEBI" id="CHEBI:33019"/>
        <dbReference type="ChEBI" id="CHEBI:57464"/>
        <dbReference type="ChEBI" id="CHEBI:58115"/>
        <dbReference type="ChEBI" id="CHEBI:58359"/>
        <dbReference type="ChEBI" id="CHEBI:456215"/>
        <dbReference type="EC" id="6.3.5.2"/>
    </reaction>
</comment>
<comment type="pathway">
    <text evidence="1">Purine metabolism; GMP biosynthesis; GMP from XMP (L-Gln route): step 1/1.</text>
</comment>
<comment type="subunit">
    <text evidence="1">Homodimer.</text>
</comment>